<accession>A0KZH8</accession>
<feature type="chain" id="PRO_0000339852" description="UPF0597 protein Shewana3_2972">
    <location>
        <begin position="1"/>
        <end position="424"/>
    </location>
</feature>
<gene>
    <name type="ordered locus">Shewana3_2972</name>
</gene>
<sequence>MKPLWQQYIQIINQVVKPALGCTEPIAAAYAAAVARTLLPVAPESIAVQVSDNLYKNSMGVYVPGTGKIGLAIAAAAGALAGNADAGLEVLANVTPEQVAQAQTLIDAGKVKVERTETDEFIYCCVSLTAGEQEAMVKICGGHTLIAEKRLNGELVFTADSAQAKATGSICDGVDINIESIYRFAQEVPFEEIQFILKASELNSKLSDEGMSKPYGLEVGRTMKNGIAAGIIGEDLLNKIVMLTAAASDARMGGANLPAMSNLGSGNQGIAATIPVVITAQCYKVSEEKLARALIMSHLGAIYIKSHYPPLSAFCGNTVTSAAASMAMVYLAGGSFEQSCFAIQNVISDSSGMVCDGAKASCAMKVSTSSSAAVRSFLMALNSQNVSGQGIIAKDVEKTIKNIGKMVLNGMSSTDVTIINIMSE</sequence>
<evidence type="ECO:0000255" key="1">
    <source>
        <dbReference type="HAMAP-Rule" id="MF_01845"/>
    </source>
</evidence>
<proteinExistence type="inferred from homology"/>
<protein>
    <recommendedName>
        <fullName evidence="1">UPF0597 protein Shewana3_2972</fullName>
    </recommendedName>
</protein>
<dbReference type="EMBL" id="CP000469">
    <property type="protein sequence ID" value="ABK49197.1"/>
    <property type="molecule type" value="Genomic_DNA"/>
</dbReference>
<dbReference type="RefSeq" id="WP_011717827.1">
    <property type="nucleotide sequence ID" value="NC_008577.1"/>
</dbReference>
<dbReference type="SMR" id="A0KZH8"/>
<dbReference type="STRING" id="94122.Shewana3_2972"/>
<dbReference type="KEGG" id="shn:Shewana3_2972"/>
<dbReference type="eggNOG" id="COG3681">
    <property type="taxonomic scope" value="Bacteria"/>
</dbReference>
<dbReference type="HOGENOM" id="CLU_051840_0_0_6"/>
<dbReference type="OrthoDB" id="41906at2"/>
<dbReference type="Proteomes" id="UP000002589">
    <property type="component" value="Chromosome"/>
</dbReference>
<dbReference type="GO" id="GO:0080146">
    <property type="term" value="F:L-cysteine desulfhydrase activity"/>
    <property type="evidence" value="ECO:0007669"/>
    <property type="project" value="TreeGrafter"/>
</dbReference>
<dbReference type="GO" id="GO:0019450">
    <property type="term" value="P:L-cysteine catabolic process to pyruvate"/>
    <property type="evidence" value="ECO:0007669"/>
    <property type="project" value="TreeGrafter"/>
</dbReference>
<dbReference type="HAMAP" id="MF_01845">
    <property type="entry name" value="UPF0597"/>
    <property type="match status" value="1"/>
</dbReference>
<dbReference type="InterPro" id="IPR005130">
    <property type="entry name" value="Ser_deHydtase-like_asu"/>
</dbReference>
<dbReference type="InterPro" id="IPR021144">
    <property type="entry name" value="UPF0597"/>
</dbReference>
<dbReference type="PANTHER" id="PTHR30501">
    <property type="entry name" value="UPF0597 PROTEIN YHAM"/>
    <property type="match status" value="1"/>
</dbReference>
<dbReference type="PANTHER" id="PTHR30501:SF2">
    <property type="entry name" value="UPF0597 PROTEIN YHAM"/>
    <property type="match status" value="1"/>
</dbReference>
<dbReference type="Pfam" id="PF03313">
    <property type="entry name" value="SDH_alpha"/>
    <property type="match status" value="1"/>
</dbReference>
<dbReference type="PIRSF" id="PIRSF006054">
    <property type="entry name" value="UCP006054"/>
    <property type="match status" value="1"/>
</dbReference>
<reference key="1">
    <citation type="submission" date="2006-09" db="EMBL/GenBank/DDBJ databases">
        <title>Complete sequence of chromosome 1 of Shewanella sp. ANA-3.</title>
        <authorList>
            <person name="Copeland A."/>
            <person name="Lucas S."/>
            <person name="Lapidus A."/>
            <person name="Barry K."/>
            <person name="Detter J.C."/>
            <person name="Glavina del Rio T."/>
            <person name="Hammon N."/>
            <person name="Israni S."/>
            <person name="Dalin E."/>
            <person name="Tice H."/>
            <person name="Pitluck S."/>
            <person name="Chertkov O."/>
            <person name="Brettin T."/>
            <person name="Bruce D."/>
            <person name="Han C."/>
            <person name="Tapia R."/>
            <person name="Gilna P."/>
            <person name="Schmutz J."/>
            <person name="Larimer F."/>
            <person name="Land M."/>
            <person name="Hauser L."/>
            <person name="Kyrpides N."/>
            <person name="Kim E."/>
            <person name="Newman D."/>
            <person name="Salticov C."/>
            <person name="Konstantinidis K."/>
            <person name="Klappenback J."/>
            <person name="Tiedje J."/>
            <person name="Richardson P."/>
        </authorList>
    </citation>
    <scope>NUCLEOTIDE SEQUENCE [LARGE SCALE GENOMIC DNA]</scope>
    <source>
        <strain>ANA-3</strain>
    </source>
</reference>
<name>Y2972_SHESA</name>
<comment type="similarity">
    <text evidence="1">Belongs to the UPF0597 family.</text>
</comment>
<organism>
    <name type="scientific">Shewanella sp. (strain ANA-3)</name>
    <dbReference type="NCBI Taxonomy" id="94122"/>
    <lineage>
        <taxon>Bacteria</taxon>
        <taxon>Pseudomonadati</taxon>
        <taxon>Pseudomonadota</taxon>
        <taxon>Gammaproteobacteria</taxon>
        <taxon>Alteromonadales</taxon>
        <taxon>Shewanellaceae</taxon>
        <taxon>Shewanella</taxon>
    </lineage>
</organism>